<comment type="function">
    <text evidence="1">Negatively regulates the transcription of the flagellar master operon flhDC by binding to the upstream region of the operon.</text>
</comment>
<comment type="similarity">
    <text evidence="2">Belongs to the LysR transcriptional regulatory family.</text>
</comment>
<sequence length="279" mass="31776">MDTELLKTFLEVSRTRHFGRAAESLYLTQSAVSFRIRQLENQLGVNLFTRHRNNIRLTAAGEKLLPYAETLMSTWQAARKEVAHTSRHNEFSIGASASLWECMLNQWLGRLYQNQDAHTGLQFEARIAQRQSLVKQLHERQLDLLITTEAPKMDEFSSQLLGYFTLALYTSAPSKLKGDLNYLRLEWGPDFQQHEAGLIGADEVPILTTSSAELAQQQIAMLNGCTWLPVSWARKKGGLHTVVDSTTLSRPLYAIWLQNSDKNTLIRDLLKINVLDEVY</sequence>
<proteinExistence type="inferred from homology"/>
<keyword id="KW-0238">DNA-binding</keyword>
<keyword id="KW-1185">Reference proteome</keyword>
<keyword id="KW-0678">Repressor</keyword>
<keyword id="KW-0804">Transcription</keyword>
<keyword id="KW-0805">Transcription regulation</keyword>
<reference key="1">
    <citation type="journal article" date="2005" name="Nucleic Acids Res.">
        <title>Genome dynamics and diversity of Shigella species, the etiologic agents of bacillary dysentery.</title>
        <authorList>
            <person name="Yang F."/>
            <person name="Yang J."/>
            <person name="Zhang X."/>
            <person name="Chen L."/>
            <person name="Jiang Y."/>
            <person name="Yan Y."/>
            <person name="Tang X."/>
            <person name="Wang J."/>
            <person name="Xiong Z."/>
            <person name="Dong J."/>
            <person name="Xue Y."/>
            <person name="Zhu Y."/>
            <person name="Xu X."/>
            <person name="Sun L."/>
            <person name="Chen S."/>
            <person name="Nie H."/>
            <person name="Peng J."/>
            <person name="Xu J."/>
            <person name="Wang Y."/>
            <person name="Yuan Z."/>
            <person name="Wen Y."/>
            <person name="Yao Z."/>
            <person name="Shen Y."/>
            <person name="Qiang B."/>
            <person name="Hou Y."/>
            <person name="Yu J."/>
            <person name="Jin Q."/>
        </authorList>
    </citation>
    <scope>NUCLEOTIDE SEQUENCE [LARGE SCALE GENOMIC DNA]</scope>
    <source>
        <strain>Sd197</strain>
    </source>
</reference>
<gene>
    <name evidence="1" type="primary">hdfR</name>
    <name type="ordered locus">SDY_3985</name>
</gene>
<protein>
    <recommendedName>
        <fullName evidence="1">HTH-type transcriptional regulator HdfR</fullName>
    </recommendedName>
    <alternativeName>
        <fullName evidence="1">H-NS-dependent flhDC regulator</fullName>
    </alternativeName>
</protein>
<accession>Q329U3</accession>
<dbReference type="EMBL" id="CP000034">
    <property type="protein sequence ID" value="ABB63912.1"/>
    <property type="molecule type" value="Genomic_DNA"/>
</dbReference>
<dbReference type="RefSeq" id="WP_000379246.1">
    <property type="nucleotide sequence ID" value="NC_007606.1"/>
</dbReference>
<dbReference type="RefSeq" id="YP_405403.1">
    <property type="nucleotide sequence ID" value="NC_007606.1"/>
</dbReference>
<dbReference type="SMR" id="Q329U3"/>
<dbReference type="STRING" id="300267.SDY_3985"/>
<dbReference type="EnsemblBacteria" id="ABB63912">
    <property type="protein sequence ID" value="ABB63912"/>
    <property type="gene ID" value="SDY_3985"/>
</dbReference>
<dbReference type="GeneID" id="75204755"/>
<dbReference type="KEGG" id="sdy:SDY_3985"/>
<dbReference type="PATRIC" id="fig|300267.13.peg.4699"/>
<dbReference type="HOGENOM" id="CLU_039613_8_2_6"/>
<dbReference type="Proteomes" id="UP000002716">
    <property type="component" value="Chromosome"/>
</dbReference>
<dbReference type="GO" id="GO:0003677">
    <property type="term" value="F:DNA binding"/>
    <property type="evidence" value="ECO:0007669"/>
    <property type="project" value="UniProtKB-KW"/>
</dbReference>
<dbReference type="GO" id="GO:0003700">
    <property type="term" value="F:DNA-binding transcription factor activity"/>
    <property type="evidence" value="ECO:0007669"/>
    <property type="project" value="UniProtKB-UniRule"/>
</dbReference>
<dbReference type="GO" id="GO:0045892">
    <property type="term" value="P:negative regulation of DNA-templated transcription"/>
    <property type="evidence" value="ECO:0007669"/>
    <property type="project" value="UniProtKB-UniRule"/>
</dbReference>
<dbReference type="FunFam" id="1.10.10.10:FF:000001">
    <property type="entry name" value="LysR family transcriptional regulator"/>
    <property type="match status" value="1"/>
</dbReference>
<dbReference type="Gene3D" id="3.40.190.10">
    <property type="entry name" value="Periplasmic binding protein-like II"/>
    <property type="match status" value="2"/>
</dbReference>
<dbReference type="Gene3D" id="1.10.10.10">
    <property type="entry name" value="Winged helix-like DNA-binding domain superfamily/Winged helix DNA-binding domain"/>
    <property type="match status" value="1"/>
</dbReference>
<dbReference type="HAMAP" id="MF_01233">
    <property type="entry name" value="HTH_type_HdfR"/>
    <property type="match status" value="1"/>
</dbReference>
<dbReference type="InterPro" id="IPR050176">
    <property type="entry name" value="LTTR"/>
</dbReference>
<dbReference type="InterPro" id="IPR005119">
    <property type="entry name" value="LysR_subst-bd"/>
</dbReference>
<dbReference type="InterPro" id="IPR020890">
    <property type="entry name" value="Tscrpt_reg_HTH_HdfR"/>
</dbReference>
<dbReference type="InterPro" id="IPR000847">
    <property type="entry name" value="Tscrpt_reg_HTH_LysR"/>
</dbReference>
<dbReference type="InterPro" id="IPR036388">
    <property type="entry name" value="WH-like_DNA-bd_sf"/>
</dbReference>
<dbReference type="InterPro" id="IPR036390">
    <property type="entry name" value="WH_DNA-bd_sf"/>
</dbReference>
<dbReference type="NCBIfam" id="NF002946">
    <property type="entry name" value="PRK03601.1"/>
    <property type="match status" value="1"/>
</dbReference>
<dbReference type="PANTHER" id="PTHR30579:SF8">
    <property type="entry name" value="HTH-TYPE TRANSCRIPTIONAL REGULATOR HDFR"/>
    <property type="match status" value="1"/>
</dbReference>
<dbReference type="PANTHER" id="PTHR30579">
    <property type="entry name" value="TRANSCRIPTIONAL REGULATOR"/>
    <property type="match status" value="1"/>
</dbReference>
<dbReference type="Pfam" id="PF00126">
    <property type="entry name" value="HTH_1"/>
    <property type="match status" value="1"/>
</dbReference>
<dbReference type="Pfam" id="PF03466">
    <property type="entry name" value="LysR_substrate"/>
    <property type="match status" value="1"/>
</dbReference>
<dbReference type="PRINTS" id="PR00039">
    <property type="entry name" value="HTHLYSR"/>
</dbReference>
<dbReference type="SUPFAM" id="SSF53850">
    <property type="entry name" value="Periplasmic binding protein-like II"/>
    <property type="match status" value="1"/>
</dbReference>
<dbReference type="SUPFAM" id="SSF46785">
    <property type="entry name" value="Winged helix' DNA-binding domain"/>
    <property type="match status" value="1"/>
</dbReference>
<dbReference type="PROSITE" id="PS50931">
    <property type="entry name" value="HTH_LYSR"/>
    <property type="match status" value="1"/>
</dbReference>
<feature type="chain" id="PRO_1000066898" description="HTH-type transcriptional regulator HdfR">
    <location>
        <begin position="1"/>
        <end position="279"/>
    </location>
</feature>
<feature type="domain" description="HTH lysR-type" evidence="1">
    <location>
        <begin position="1"/>
        <end position="58"/>
    </location>
</feature>
<feature type="DNA-binding region" description="H-T-H motif" evidence="1">
    <location>
        <begin position="18"/>
        <end position="37"/>
    </location>
</feature>
<name>HDFR_SHIDS</name>
<evidence type="ECO:0000255" key="1">
    <source>
        <dbReference type="HAMAP-Rule" id="MF_01233"/>
    </source>
</evidence>
<evidence type="ECO:0000305" key="2"/>
<organism>
    <name type="scientific">Shigella dysenteriae serotype 1 (strain Sd197)</name>
    <dbReference type="NCBI Taxonomy" id="300267"/>
    <lineage>
        <taxon>Bacteria</taxon>
        <taxon>Pseudomonadati</taxon>
        <taxon>Pseudomonadota</taxon>
        <taxon>Gammaproteobacteria</taxon>
        <taxon>Enterobacterales</taxon>
        <taxon>Enterobacteriaceae</taxon>
        <taxon>Shigella</taxon>
    </lineage>
</organism>